<reference key="1">
    <citation type="submission" date="1997-03" db="EMBL/GenBank/DDBJ databases">
        <title>A 148 kbp sequence of the region between 35 and 47 degree of the Bacillus subtilis genome.</title>
        <authorList>
            <person name="Kasahara Y."/>
            <person name="Nakai S."/>
            <person name="Lee S."/>
            <person name="Sadaie Y."/>
            <person name="Ogasawara N."/>
        </authorList>
    </citation>
    <scope>NUCLEOTIDE SEQUENCE [GENOMIC DNA]</scope>
    <source>
        <strain>168</strain>
    </source>
</reference>
<reference key="2">
    <citation type="journal article" date="1997" name="Nature">
        <title>The complete genome sequence of the Gram-positive bacterium Bacillus subtilis.</title>
        <authorList>
            <person name="Kunst F."/>
            <person name="Ogasawara N."/>
            <person name="Moszer I."/>
            <person name="Albertini A.M."/>
            <person name="Alloni G."/>
            <person name="Azevedo V."/>
            <person name="Bertero M.G."/>
            <person name="Bessieres P."/>
            <person name="Bolotin A."/>
            <person name="Borchert S."/>
            <person name="Borriss R."/>
            <person name="Boursier L."/>
            <person name="Brans A."/>
            <person name="Braun M."/>
            <person name="Brignell S.C."/>
            <person name="Bron S."/>
            <person name="Brouillet S."/>
            <person name="Bruschi C.V."/>
            <person name="Caldwell B."/>
            <person name="Capuano V."/>
            <person name="Carter N.M."/>
            <person name="Choi S.-K."/>
            <person name="Codani J.-J."/>
            <person name="Connerton I.F."/>
            <person name="Cummings N.J."/>
            <person name="Daniel R.A."/>
            <person name="Denizot F."/>
            <person name="Devine K.M."/>
            <person name="Duesterhoeft A."/>
            <person name="Ehrlich S.D."/>
            <person name="Emmerson P.T."/>
            <person name="Entian K.-D."/>
            <person name="Errington J."/>
            <person name="Fabret C."/>
            <person name="Ferrari E."/>
            <person name="Foulger D."/>
            <person name="Fritz C."/>
            <person name="Fujita M."/>
            <person name="Fujita Y."/>
            <person name="Fuma S."/>
            <person name="Galizzi A."/>
            <person name="Galleron N."/>
            <person name="Ghim S.-Y."/>
            <person name="Glaser P."/>
            <person name="Goffeau A."/>
            <person name="Golightly E.J."/>
            <person name="Grandi G."/>
            <person name="Guiseppi G."/>
            <person name="Guy B.J."/>
            <person name="Haga K."/>
            <person name="Haiech J."/>
            <person name="Harwood C.R."/>
            <person name="Henaut A."/>
            <person name="Hilbert H."/>
            <person name="Holsappel S."/>
            <person name="Hosono S."/>
            <person name="Hullo M.-F."/>
            <person name="Itaya M."/>
            <person name="Jones L.-M."/>
            <person name="Joris B."/>
            <person name="Karamata D."/>
            <person name="Kasahara Y."/>
            <person name="Klaerr-Blanchard M."/>
            <person name="Klein C."/>
            <person name="Kobayashi Y."/>
            <person name="Koetter P."/>
            <person name="Koningstein G."/>
            <person name="Krogh S."/>
            <person name="Kumano M."/>
            <person name="Kurita K."/>
            <person name="Lapidus A."/>
            <person name="Lardinois S."/>
            <person name="Lauber J."/>
            <person name="Lazarevic V."/>
            <person name="Lee S.-M."/>
            <person name="Levine A."/>
            <person name="Liu H."/>
            <person name="Masuda S."/>
            <person name="Mauel C."/>
            <person name="Medigue C."/>
            <person name="Medina N."/>
            <person name="Mellado R.P."/>
            <person name="Mizuno M."/>
            <person name="Moestl D."/>
            <person name="Nakai S."/>
            <person name="Noback M."/>
            <person name="Noone D."/>
            <person name="O'Reilly M."/>
            <person name="Ogawa K."/>
            <person name="Ogiwara A."/>
            <person name="Oudega B."/>
            <person name="Park S.-H."/>
            <person name="Parro V."/>
            <person name="Pohl T.M."/>
            <person name="Portetelle D."/>
            <person name="Porwollik S."/>
            <person name="Prescott A.M."/>
            <person name="Presecan E."/>
            <person name="Pujic P."/>
            <person name="Purnelle B."/>
            <person name="Rapoport G."/>
            <person name="Rey M."/>
            <person name="Reynolds S."/>
            <person name="Rieger M."/>
            <person name="Rivolta C."/>
            <person name="Rocha E."/>
            <person name="Roche B."/>
            <person name="Rose M."/>
            <person name="Sadaie Y."/>
            <person name="Sato T."/>
            <person name="Scanlan E."/>
            <person name="Schleich S."/>
            <person name="Schroeter R."/>
            <person name="Scoffone F."/>
            <person name="Sekiguchi J."/>
            <person name="Sekowska A."/>
            <person name="Seror S.J."/>
            <person name="Serror P."/>
            <person name="Shin B.-S."/>
            <person name="Soldo B."/>
            <person name="Sorokin A."/>
            <person name="Tacconi E."/>
            <person name="Takagi T."/>
            <person name="Takahashi H."/>
            <person name="Takemaru K."/>
            <person name="Takeuchi M."/>
            <person name="Tamakoshi A."/>
            <person name="Tanaka T."/>
            <person name="Terpstra P."/>
            <person name="Tognoni A."/>
            <person name="Tosato V."/>
            <person name="Uchiyama S."/>
            <person name="Vandenbol M."/>
            <person name="Vannier F."/>
            <person name="Vassarotti A."/>
            <person name="Viari A."/>
            <person name="Wambutt R."/>
            <person name="Wedler E."/>
            <person name="Wedler H."/>
            <person name="Weitzenegger T."/>
            <person name="Winters P."/>
            <person name="Wipat A."/>
            <person name="Yamamoto H."/>
            <person name="Yamane K."/>
            <person name="Yasumoto K."/>
            <person name="Yata K."/>
            <person name="Yoshida K."/>
            <person name="Yoshikawa H.-F."/>
            <person name="Zumstein E."/>
            <person name="Yoshikawa H."/>
            <person name="Danchin A."/>
        </authorList>
    </citation>
    <scope>NUCLEOTIDE SEQUENCE [LARGE SCALE GENOMIC DNA]</scope>
    <source>
        <strain>168</strain>
    </source>
</reference>
<keyword id="KW-1003">Cell membrane</keyword>
<keyword id="KW-0472">Membrane</keyword>
<keyword id="KW-1185">Reference proteome</keyword>
<keyword id="KW-0812">Transmembrane</keyword>
<keyword id="KW-1133">Transmembrane helix</keyword>
<feature type="chain" id="PRO_0000365023" description="Uncharacterized protein YddB">
    <location>
        <begin position="1"/>
        <end position="354"/>
    </location>
</feature>
<feature type="transmembrane region" description="Helical" evidence="1">
    <location>
        <begin position="43"/>
        <end position="63"/>
    </location>
</feature>
<name>YDDB_BACSU</name>
<comment type="subcellular location">
    <subcellularLocation>
        <location evidence="2">Cell membrane</location>
        <topology evidence="2">Single-pass membrane protein</topology>
    </subcellularLocation>
</comment>
<dbReference type="EMBL" id="AB001488">
    <property type="protein sequence ID" value="BAA19328.1"/>
    <property type="molecule type" value="Genomic_DNA"/>
</dbReference>
<dbReference type="EMBL" id="AL009126">
    <property type="protein sequence ID" value="CAB12298.1"/>
    <property type="molecule type" value="Genomic_DNA"/>
</dbReference>
<dbReference type="PIR" id="C69775">
    <property type="entry name" value="C69775"/>
</dbReference>
<dbReference type="RefSeq" id="WP_009966627.1">
    <property type="nucleotide sequence ID" value="NZ_OZ025638.1"/>
</dbReference>
<dbReference type="SMR" id="O31491"/>
<dbReference type="FunCoup" id="O31491">
    <property type="interactions" value="241"/>
</dbReference>
<dbReference type="STRING" id="224308.BSU04910"/>
<dbReference type="PaxDb" id="224308-BSU04910"/>
<dbReference type="EnsemblBacteria" id="CAB12298">
    <property type="protein sequence ID" value="CAB12298"/>
    <property type="gene ID" value="BSU_04910"/>
</dbReference>
<dbReference type="GeneID" id="939918"/>
<dbReference type="KEGG" id="bsu:BSU04910"/>
<dbReference type="PATRIC" id="fig|224308.179.peg.522"/>
<dbReference type="eggNOG" id="ENOG5032R38">
    <property type="taxonomic scope" value="Bacteria"/>
</dbReference>
<dbReference type="InParanoid" id="O31491"/>
<dbReference type="OrthoDB" id="2189690at2"/>
<dbReference type="BioCyc" id="BSUB:BSU04910-MONOMER"/>
<dbReference type="Proteomes" id="UP000001570">
    <property type="component" value="Chromosome"/>
</dbReference>
<dbReference type="GO" id="GO:0005886">
    <property type="term" value="C:plasma membrane"/>
    <property type="evidence" value="ECO:0007669"/>
    <property type="project" value="UniProtKB-SubCell"/>
</dbReference>
<dbReference type="CDD" id="cd16428">
    <property type="entry name" value="TcpC_C"/>
    <property type="match status" value="1"/>
</dbReference>
<dbReference type="CDD" id="cd16386">
    <property type="entry name" value="TcpC_N"/>
    <property type="match status" value="1"/>
</dbReference>
<dbReference type="Gene3D" id="3.10.450.540">
    <property type="match status" value="1"/>
</dbReference>
<dbReference type="InterPro" id="IPR024735">
    <property type="entry name" value="TcpC"/>
</dbReference>
<dbReference type="InterPro" id="IPR035628">
    <property type="entry name" value="TcpC_C"/>
</dbReference>
<dbReference type="Pfam" id="PF12642">
    <property type="entry name" value="TpcC"/>
    <property type="match status" value="1"/>
</dbReference>
<sequence length="354" mass="41407">MLNKEIGSDKKEESFFRSAFQKLKRIERPEKDKQKVPRDRSKLIAVTLWSCVGSLLFICLLAVLLSINTRSQLNDMKDETNKPTNDDKQKISVTAAENFLSGFINEYMNVKNDQESIEKRMQSLESYMVKQEDNHFEDEERFNVDGLKGDRELKGYSLYNVKEGDKNSLFQYKVTYENLYPVEKEVEKEVKDGKKKKKVKEKVKTNEKYEKQMLLNIPVTNKGDSFAVSAVPYFTQIYDLKGDIAFKGKEETRDEYAGEKKESIESFLQNFFEKYASEKKEEMVYMMKKPEALEGNLLFGEVQSVKIFETKKGFEVFCAVRFKEKENDIPVNEKFSLEITENSGQFYVNKLKHQ</sequence>
<gene>
    <name type="primary">yddB</name>
    <name type="ordered locus">BSU04910</name>
</gene>
<evidence type="ECO:0000255" key="1"/>
<evidence type="ECO:0000305" key="2"/>
<proteinExistence type="predicted"/>
<accession>O31491</accession>
<accession>P96639</accession>
<organism>
    <name type="scientific">Bacillus subtilis (strain 168)</name>
    <dbReference type="NCBI Taxonomy" id="224308"/>
    <lineage>
        <taxon>Bacteria</taxon>
        <taxon>Bacillati</taxon>
        <taxon>Bacillota</taxon>
        <taxon>Bacilli</taxon>
        <taxon>Bacillales</taxon>
        <taxon>Bacillaceae</taxon>
        <taxon>Bacillus</taxon>
    </lineage>
</organism>
<protein>
    <recommendedName>
        <fullName>Uncharacterized protein YddB</fullName>
    </recommendedName>
</protein>